<feature type="chain" id="PRO_0000179134" description="Phosphate acetyltransferase">
    <location>
        <begin position="1"/>
        <end position="320"/>
    </location>
</feature>
<organism>
    <name type="scientific">Mycoplasma pneumoniae (strain ATCC 29342 / M129 / Subtype 1)</name>
    <name type="common">Mycoplasmoides pneumoniae</name>
    <dbReference type="NCBI Taxonomy" id="272634"/>
    <lineage>
        <taxon>Bacteria</taxon>
        <taxon>Bacillati</taxon>
        <taxon>Mycoplasmatota</taxon>
        <taxon>Mycoplasmoidales</taxon>
        <taxon>Mycoplasmoidaceae</taxon>
        <taxon>Mycoplasmoides</taxon>
    </lineage>
</organism>
<evidence type="ECO:0000305" key="1"/>
<comment type="catalytic activity">
    <reaction>
        <text>acetyl-CoA + phosphate = acetyl phosphate + CoA</text>
        <dbReference type="Rhea" id="RHEA:19521"/>
        <dbReference type="ChEBI" id="CHEBI:22191"/>
        <dbReference type="ChEBI" id="CHEBI:43474"/>
        <dbReference type="ChEBI" id="CHEBI:57287"/>
        <dbReference type="ChEBI" id="CHEBI:57288"/>
        <dbReference type="EC" id="2.3.1.8"/>
    </reaction>
</comment>
<comment type="pathway">
    <text>Metabolic intermediate biosynthesis; acetyl-CoA biosynthesis; acetyl-CoA from acetate: step 2/2.</text>
</comment>
<comment type="subcellular location">
    <subcellularLocation>
        <location evidence="1">Cytoplasm</location>
    </subcellularLocation>
</comment>
<comment type="similarity">
    <text evidence="1">Belongs to the phosphate acetyltransferase and butyryltransferase family.</text>
</comment>
<name>PTAS_MYCPN</name>
<keyword id="KW-0012">Acyltransferase</keyword>
<keyword id="KW-0963">Cytoplasm</keyword>
<keyword id="KW-1185">Reference proteome</keyword>
<keyword id="KW-0808">Transferase</keyword>
<reference key="1">
    <citation type="journal article" date="1996" name="Nucleic Acids Res.">
        <title>Complete sequence analysis of the genome of the bacterium Mycoplasma pneumoniae.</title>
        <authorList>
            <person name="Himmelreich R."/>
            <person name="Hilbert H."/>
            <person name="Plagens H."/>
            <person name="Pirkl E."/>
            <person name="Li B.-C."/>
            <person name="Herrmann R."/>
        </authorList>
    </citation>
    <scope>NUCLEOTIDE SEQUENCE [LARGE SCALE GENOMIC DNA]</scope>
    <source>
        <strain>ATCC 29342 / M129 / Subtype 1</strain>
    </source>
</reference>
<protein>
    <recommendedName>
        <fullName>Phosphate acetyltransferase</fullName>
        <ecNumber>2.3.1.8</ecNumber>
    </recommendedName>
    <alternativeName>
        <fullName>Phosphotransacetylase</fullName>
    </alternativeName>
</protein>
<proteinExistence type="inferred from homology"/>
<gene>
    <name type="primary">pta</name>
    <name type="ordered locus">MPN_428</name>
    <name type="ORF">MP413</name>
</gene>
<sequence length="320" mass="35219">MSVIDLLKQRVQSAGKKPVIIFPEGWSPTVMEAVNQLQQAGILTPPVIFRTRSEVPAGFNTAIKHYVIEEMDLTKYANFVYEKRKHKGMEMREAQKFVRDASSLAATLVALNEVDGEVCGKEYATKDTLRPALQLLGTGNFVSSVFIMEKNEERLYFTDCAFAVYPSPQELAVVAENTFKFAQSMGEPELKMVFLSYSTLGSGKGEAVDKVVSATQIFLEKHPELKANVCGELQFDSAFVEKVRKQKAPNLTWNGSANIYVFPNLDAGNIGYKIAQRLGGYEAIGPIVLGLARPFNDLSRGASVSDVFNVGIITAAQTLK</sequence>
<dbReference type="EC" id="2.3.1.8"/>
<dbReference type="EMBL" id="U00089">
    <property type="protein sequence ID" value="AAB96061.1"/>
    <property type="molecule type" value="Genomic_DNA"/>
</dbReference>
<dbReference type="PIR" id="S73739">
    <property type="entry name" value="S73739"/>
</dbReference>
<dbReference type="RefSeq" id="NP_110116.1">
    <property type="nucleotide sequence ID" value="NC_000912.1"/>
</dbReference>
<dbReference type="RefSeq" id="WP_010874784.1">
    <property type="nucleotide sequence ID" value="NC_000912.1"/>
</dbReference>
<dbReference type="SMR" id="P75359"/>
<dbReference type="IntAct" id="P75359">
    <property type="interactions" value="2"/>
</dbReference>
<dbReference type="STRING" id="272634.MPN_428"/>
<dbReference type="EnsemblBacteria" id="AAB96061">
    <property type="protein sequence ID" value="AAB96061"/>
    <property type="gene ID" value="MPN_428"/>
</dbReference>
<dbReference type="KEGG" id="mpn:MPN_428"/>
<dbReference type="PATRIC" id="fig|272634.6.peg.463"/>
<dbReference type="HOGENOM" id="CLU_019723_0_1_14"/>
<dbReference type="OrthoDB" id="9805787at2"/>
<dbReference type="BioCyc" id="MetaCyc:MONOMER-602"/>
<dbReference type="BioCyc" id="MPNE272634:G1GJ3-692-MONOMER"/>
<dbReference type="UniPathway" id="UPA00340">
    <property type="reaction ID" value="UER00459"/>
</dbReference>
<dbReference type="Proteomes" id="UP000000808">
    <property type="component" value="Chromosome"/>
</dbReference>
<dbReference type="GO" id="GO:0005737">
    <property type="term" value="C:cytoplasm"/>
    <property type="evidence" value="ECO:0007669"/>
    <property type="project" value="UniProtKB-SubCell"/>
</dbReference>
<dbReference type="GO" id="GO:0008959">
    <property type="term" value="F:phosphate acetyltransferase activity"/>
    <property type="evidence" value="ECO:0007669"/>
    <property type="project" value="UniProtKB-EC"/>
</dbReference>
<dbReference type="GO" id="GO:0006085">
    <property type="term" value="P:acetyl-CoA biosynthetic process"/>
    <property type="evidence" value="ECO:0007669"/>
    <property type="project" value="UniProtKB-UniPathway"/>
</dbReference>
<dbReference type="Gene3D" id="3.40.50.10950">
    <property type="match status" value="1"/>
</dbReference>
<dbReference type="Gene3D" id="3.40.50.10750">
    <property type="entry name" value="Isocitrate/Isopropylmalate dehydrogenase-like"/>
    <property type="match status" value="1"/>
</dbReference>
<dbReference type="InterPro" id="IPR012147">
    <property type="entry name" value="P_Ac_Bu_trans"/>
</dbReference>
<dbReference type="InterPro" id="IPR004614">
    <property type="entry name" value="P_AcTrfase"/>
</dbReference>
<dbReference type="InterPro" id="IPR042113">
    <property type="entry name" value="P_AcTrfase_dom1"/>
</dbReference>
<dbReference type="InterPro" id="IPR042112">
    <property type="entry name" value="P_AcTrfase_dom2"/>
</dbReference>
<dbReference type="InterPro" id="IPR050500">
    <property type="entry name" value="Phos_Acetyltrans/Butyryltrans"/>
</dbReference>
<dbReference type="InterPro" id="IPR002505">
    <property type="entry name" value="PTA_PTB"/>
</dbReference>
<dbReference type="NCBIfam" id="NF007233">
    <property type="entry name" value="PRK09653.1"/>
    <property type="match status" value="1"/>
</dbReference>
<dbReference type="NCBIfam" id="TIGR00651">
    <property type="entry name" value="pta"/>
    <property type="match status" value="1"/>
</dbReference>
<dbReference type="PANTHER" id="PTHR43356">
    <property type="entry name" value="PHOSPHATE ACETYLTRANSFERASE"/>
    <property type="match status" value="1"/>
</dbReference>
<dbReference type="PANTHER" id="PTHR43356:SF3">
    <property type="entry name" value="PHOSPHATE ACETYLTRANSFERASE"/>
    <property type="match status" value="1"/>
</dbReference>
<dbReference type="Pfam" id="PF01515">
    <property type="entry name" value="PTA_PTB"/>
    <property type="match status" value="1"/>
</dbReference>
<dbReference type="PIRSF" id="PIRSF000428">
    <property type="entry name" value="P_Ac_trans"/>
    <property type="match status" value="1"/>
</dbReference>
<dbReference type="SUPFAM" id="SSF53659">
    <property type="entry name" value="Isocitrate/Isopropylmalate dehydrogenase-like"/>
    <property type="match status" value="1"/>
</dbReference>
<accession>P75359</accession>